<proteinExistence type="evidence at protein level"/>
<gene>
    <name evidence="2" type="primary">INP1</name>
    <name evidence="6" type="ordered locus">Os02g0661300</name>
    <name evidence="3" type="ordered locus">LOC_Os02g44250</name>
    <name evidence="4" type="ORF">P0516F12.11</name>
    <name evidence="5" type="ORF">P0708H12.37</name>
</gene>
<dbReference type="EMBL" id="AP004883">
    <property type="protein sequence ID" value="BAD25624.1"/>
    <property type="molecule type" value="Genomic_DNA"/>
</dbReference>
<dbReference type="EMBL" id="AP005072">
    <property type="protein sequence ID" value="BAD25755.1"/>
    <property type="molecule type" value="Genomic_DNA"/>
</dbReference>
<dbReference type="EMBL" id="AP008208">
    <property type="protein sequence ID" value="BAF09560.1"/>
    <property type="molecule type" value="Genomic_DNA"/>
</dbReference>
<dbReference type="EMBL" id="AP014958">
    <property type="protein sequence ID" value="BAS80142.1"/>
    <property type="molecule type" value="Genomic_DNA"/>
</dbReference>
<dbReference type="EMBL" id="AK106503">
    <property type="protein sequence ID" value="BAG97742.1"/>
    <property type="molecule type" value="mRNA"/>
</dbReference>
<dbReference type="SMR" id="Q6H6M5"/>
<dbReference type="FunCoup" id="Q6H6M5">
    <property type="interactions" value="1824"/>
</dbReference>
<dbReference type="STRING" id="39947.Q6H694"/>
<dbReference type="PaxDb" id="39947-Q6H694"/>
<dbReference type="EnsemblPlants" id="Os02t0661300-01">
    <property type="protein sequence ID" value="Os02t0661300-01"/>
    <property type="gene ID" value="Os02g0661300"/>
</dbReference>
<dbReference type="Gramene" id="Os02t0661300-01">
    <property type="protein sequence ID" value="Os02t0661300-01"/>
    <property type="gene ID" value="Os02g0661300"/>
</dbReference>
<dbReference type="KEGG" id="dosa:Os02g0661300"/>
<dbReference type="eggNOG" id="ENOG502R2CB">
    <property type="taxonomic scope" value="Eukaryota"/>
</dbReference>
<dbReference type="HOGENOM" id="CLU_1063214_0_0_1"/>
<dbReference type="InParanoid" id="Q6H6M5"/>
<dbReference type="OMA" id="QNWHVVM"/>
<dbReference type="OrthoDB" id="683795at2759"/>
<dbReference type="Proteomes" id="UP000000763">
    <property type="component" value="Chromosome 2"/>
</dbReference>
<dbReference type="Proteomes" id="UP000059680">
    <property type="component" value="Chromosome 2"/>
</dbReference>
<dbReference type="GO" id="GO:0005737">
    <property type="term" value="C:cytoplasm"/>
    <property type="evidence" value="ECO:0000314"/>
    <property type="project" value="UniProtKB"/>
</dbReference>
<dbReference type="GO" id="GO:0062074">
    <property type="term" value="C:pollen aperture"/>
    <property type="evidence" value="ECO:0000314"/>
    <property type="project" value="UniProtKB"/>
</dbReference>
<dbReference type="GO" id="GO:0043565">
    <property type="term" value="F:sequence-specific DNA binding"/>
    <property type="evidence" value="ECO:0007669"/>
    <property type="project" value="InterPro"/>
</dbReference>
<dbReference type="GO" id="GO:0006351">
    <property type="term" value="P:DNA-templated transcription"/>
    <property type="evidence" value="ECO:0007669"/>
    <property type="project" value="InterPro"/>
</dbReference>
<dbReference type="GO" id="GO:0062075">
    <property type="term" value="P:pollen aperture formation"/>
    <property type="evidence" value="ECO:0000315"/>
    <property type="project" value="UniProtKB"/>
</dbReference>
<dbReference type="GO" id="GO:0009555">
    <property type="term" value="P:pollen development"/>
    <property type="evidence" value="ECO:0000315"/>
    <property type="project" value="UniProtKB"/>
</dbReference>
<dbReference type="InterPro" id="IPR051886">
    <property type="entry name" value="Seed_Dev/Stress_Resp_Reg"/>
</dbReference>
<dbReference type="InterPro" id="IPR025422">
    <property type="entry name" value="TGA_domain"/>
</dbReference>
<dbReference type="PANTHER" id="PTHR46354">
    <property type="entry name" value="DOG1 DOMAIN-CONTAINING PROTEIN"/>
    <property type="match status" value="1"/>
</dbReference>
<dbReference type="PANTHER" id="PTHR46354:SF9">
    <property type="entry name" value="PROTEIN INAPERTURATE POLLEN1"/>
    <property type="match status" value="1"/>
</dbReference>
<dbReference type="Pfam" id="PF14144">
    <property type="entry name" value="DOG1"/>
    <property type="match status" value="1"/>
</dbReference>
<dbReference type="PROSITE" id="PS51806">
    <property type="entry name" value="DOG1"/>
    <property type="match status" value="1"/>
</dbReference>
<protein>
    <recommendedName>
        <fullName evidence="3">Protein INAPERTURATE POLLEN 1 homolog</fullName>
        <shortName evidence="2">OsINP1</shortName>
    </recommendedName>
</protein>
<reference key="1">
    <citation type="journal article" date="2005" name="Nature">
        <title>The map-based sequence of the rice genome.</title>
        <authorList>
            <consortium name="International rice genome sequencing project (IRGSP)"/>
        </authorList>
    </citation>
    <scope>NUCLEOTIDE SEQUENCE [LARGE SCALE GENOMIC DNA]</scope>
    <source>
        <strain>cv. Nipponbare</strain>
    </source>
</reference>
<reference key="2">
    <citation type="journal article" date="2008" name="Nucleic Acids Res.">
        <title>The rice annotation project database (RAP-DB): 2008 update.</title>
        <authorList>
            <consortium name="The rice annotation project (RAP)"/>
        </authorList>
    </citation>
    <scope>GENOME REANNOTATION</scope>
    <source>
        <strain>cv. Nipponbare</strain>
    </source>
</reference>
<reference key="3">
    <citation type="journal article" date="2013" name="Rice">
        <title>Improvement of the Oryza sativa Nipponbare reference genome using next generation sequence and optical map data.</title>
        <authorList>
            <person name="Kawahara Y."/>
            <person name="de la Bastide M."/>
            <person name="Hamilton J.P."/>
            <person name="Kanamori H."/>
            <person name="McCombie W.R."/>
            <person name="Ouyang S."/>
            <person name="Schwartz D.C."/>
            <person name="Tanaka T."/>
            <person name="Wu J."/>
            <person name="Zhou S."/>
            <person name="Childs K.L."/>
            <person name="Davidson R.M."/>
            <person name="Lin H."/>
            <person name="Quesada-Ocampo L."/>
            <person name="Vaillancourt B."/>
            <person name="Sakai H."/>
            <person name="Lee S.S."/>
            <person name="Kim J."/>
            <person name="Numa H."/>
            <person name="Itoh T."/>
            <person name="Buell C.R."/>
            <person name="Matsumoto T."/>
        </authorList>
    </citation>
    <scope>GENOME REANNOTATION</scope>
    <source>
        <strain>cv. Nipponbare</strain>
    </source>
</reference>
<reference key="4">
    <citation type="journal article" date="2003" name="Science">
        <title>Collection, mapping, and annotation of over 28,000 cDNA clones from japonica rice.</title>
        <authorList>
            <consortium name="The rice full-length cDNA consortium"/>
        </authorList>
    </citation>
    <scope>NUCLEOTIDE SEQUENCE [LARGE SCALE MRNA]</scope>
    <source>
        <strain>cv. Nipponbare</strain>
    </source>
</reference>
<reference key="5">
    <citation type="journal article" date="2020" name="Nat. Plants">
        <title>Rice pollen aperture formation is regulated by the interplay between OsINP1 and OsDAF1.</title>
        <authorList>
            <person name="Zhang X."/>
            <person name="Zhao G."/>
            <person name="Tan Q."/>
            <person name="Yuan H."/>
            <person name="Betts N."/>
            <person name="Zhu L."/>
            <person name="Zhang D."/>
            <person name="Liang W."/>
        </authorList>
    </citation>
    <scope>FUNCTION</scope>
    <scope>INTERACTION WITH LECRKS7/DAF1</scope>
    <scope>SUBCELLULAR LOCATION</scope>
    <scope>DISRUPTION PHENOTYPE</scope>
</reference>
<evidence type="ECO:0000269" key="1">
    <source>
    </source>
</evidence>
<evidence type="ECO:0000303" key="2">
    <source>
    </source>
</evidence>
<evidence type="ECO:0000305" key="3"/>
<evidence type="ECO:0000312" key="4">
    <source>
        <dbReference type="EMBL" id="BAD25624.1"/>
    </source>
</evidence>
<evidence type="ECO:0000312" key="5">
    <source>
        <dbReference type="EMBL" id="BAD25755.1"/>
    </source>
</evidence>
<evidence type="ECO:0000312" key="6">
    <source>
        <dbReference type="EMBL" id="BAF09560.1"/>
    </source>
</evidence>
<feature type="chain" id="PRO_0000450664" description="Protein INAPERTURATE POLLEN 1 homolog">
    <location>
        <begin position="1"/>
        <end position="232"/>
    </location>
</feature>
<name>INP1_ORYSJ</name>
<comment type="function">
    <text evidence="1">Required for pollen aperture formation, male fertility and LECRKS7/DAF1 function (PubMed:32284546). Seems to be involved in operculum protrusion (PubMed:32284546). Participates in the modification of plasma membrane at future aperture sites, possibly by creating close contact between the plasma membrane and callose wall to prevent primexine formation and sporopollenin deposition (PubMed:32284546).</text>
</comment>
<comment type="subunit">
    <text evidence="1">Interacts with LECRKS7/DAF1.</text>
</comment>
<comment type="subcellular location">
    <subcellularLocation>
        <location evidence="1">Cytoplasm</location>
    </subcellularLocation>
    <text evidence="1">Localizes uniformly in the cytoplasm of microspore mother cells (MMCs) during meiosis, in dyads and in the early tetrad stage. In the late tetrad stage, starts to move to distal poles of the tetrad, concentrating into prominent spots. Finally, localizes specifically at the site that marks the future aperture.</text>
</comment>
<comment type="disruption phenotype">
    <text evidence="1">Absence of entire pollen aperture, leading to male sterility.</text>
</comment>
<sequence>MPRPPPPPPPGRGAPGARRPMREFFAAWLSTLRSPLLPLLRRALSSSSSSSSGGWDDPLSSAAAAVEAHFQAHWSALDAAARQDPAQAVSAGDWRSPLELPFLWVGDLHPSLVTSLLRSLSPSPRLLAATDRVDRRIRAAVPSISDRLRRVQEAFISAEVSGAADVEAFLEELKDVALDANRLRRGVLSELVAAAGGYQAALFLEALSRFVLSMHDPEVLRRFDQCRASPGS</sequence>
<keyword id="KW-0963">Cytoplasm</keyword>
<keyword id="KW-1185">Reference proteome</keyword>
<organism>
    <name type="scientific">Oryza sativa subsp. japonica</name>
    <name type="common">Rice</name>
    <dbReference type="NCBI Taxonomy" id="39947"/>
    <lineage>
        <taxon>Eukaryota</taxon>
        <taxon>Viridiplantae</taxon>
        <taxon>Streptophyta</taxon>
        <taxon>Embryophyta</taxon>
        <taxon>Tracheophyta</taxon>
        <taxon>Spermatophyta</taxon>
        <taxon>Magnoliopsida</taxon>
        <taxon>Liliopsida</taxon>
        <taxon>Poales</taxon>
        <taxon>Poaceae</taxon>
        <taxon>BOP clade</taxon>
        <taxon>Oryzoideae</taxon>
        <taxon>Oryzeae</taxon>
        <taxon>Oryzinae</taxon>
        <taxon>Oryza</taxon>
        <taxon>Oryza sativa</taxon>
    </lineage>
</organism>
<accession>Q6H6M5</accession>
<accession>Q6H694</accession>